<evidence type="ECO:0000255" key="1">
    <source>
        <dbReference type="HAMAP-Rule" id="MF_01132"/>
    </source>
</evidence>
<gene>
    <name evidence="1" type="primary">spx</name>
    <name type="ordered locus">EF_2678</name>
</gene>
<keyword id="KW-0963">Cytoplasm</keyword>
<keyword id="KW-1015">Disulfide bond</keyword>
<keyword id="KW-0676">Redox-active center</keyword>
<keyword id="KW-1185">Reference proteome</keyword>
<keyword id="KW-0804">Transcription</keyword>
<keyword id="KW-0805">Transcription regulation</keyword>
<protein>
    <recommendedName>
        <fullName evidence="1">Global transcriptional regulator Spx</fullName>
    </recommendedName>
</protein>
<sequence length="132" mass="15510">MLTLYTSPSCTSCRKARAWLQEHEIPFKERNIFSEPLNIEELKAILIMTEDGTEEIISTRSKVFQKLNMDLDELPLQDLLELVQENPGLLRRPIMIDEKRLQVGFNEDEIRRFLPRDVRQLELRQAQLMAGL</sequence>
<name>SPX_ENTFA</name>
<reference key="1">
    <citation type="journal article" date="2003" name="Science">
        <title>Role of mobile DNA in the evolution of vancomycin-resistant Enterococcus faecalis.</title>
        <authorList>
            <person name="Paulsen I.T."/>
            <person name="Banerjei L."/>
            <person name="Myers G.S.A."/>
            <person name="Nelson K.E."/>
            <person name="Seshadri R."/>
            <person name="Read T.D."/>
            <person name="Fouts D.E."/>
            <person name="Eisen J.A."/>
            <person name="Gill S.R."/>
            <person name="Heidelberg J.F."/>
            <person name="Tettelin H."/>
            <person name="Dodson R.J."/>
            <person name="Umayam L.A."/>
            <person name="Brinkac L.M."/>
            <person name="Beanan M.J."/>
            <person name="Daugherty S.C."/>
            <person name="DeBoy R.T."/>
            <person name="Durkin S.A."/>
            <person name="Kolonay J.F."/>
            <person name="Madupu R."/>
            <person name="Nelson W.C."/>
            <person name="Vamathevan J.J."/>
            <person name="Tran B."/>
            <person name="Upton J."/>
            <person name="Hansen T."/>
            <person name="Shetty J."/>
            <person name="Khouri H.M."/>
            <person name="Utterback T.R."/>
            <person name="Radune D."/>
            <person name="Ketchum K.A."/>
            <person name="Dougherty B.A."/>
            <person name="Fraser C.M."/>
        </authorList>
    </citation>
    <scope>NUCLEOTIDE SEQUENCE [LARGE SCALE GENOMIC DNA]</scope>
    <source>
        <strain>ATCC 700802 / V583</strain>
    </source>
</reference>
<dbReference type="EMBL" id="AE016830">
    <property type="protein sequence ID" value="AAO82383.1"/>
    <property type="molecule type" value="Genomic_DNA"/>
</dbReference>
<dbReference type="RefSeq" id="NP_816313.1">
    <property type="nucleotide sequence ID" value="NC_004668.1"/>
</dbReference>
<dbReference type="SMR" id="Q830U3"/>
<dbReference type="STRING" id="226185.EF_2678"/>
<dbReference type="EnsemblBacteria" id="AAO82383">
    <property type="protein sequence ID" value="AAO82383"/>
    <property type="gene ID" value="EF_2678"/>
</dbReference>
<dbReference type="KEGG" id="efa:EF2678"/>
<dbReference type="PATRIC" id="fig|226185.45.peg.884"/>
<dbReference type="eggNOG" id="COG1393">
    <property type="taxonomic scope" value="Bacteria"/>
</dbReference>
<dbReference type="HOGENOM" id="CLU_116644_1_1_9"/>
<dbReference type="Proteomes" id="UP000001415">
    <property type="component" value="Chromosome"/>
</dbReference>
<dbReference type="GO" id="GO:0005737">
    <property type="term" value="C:cytoplasm"/>
    <property type="evidence" value="ECO:0007669"/>
    <property type="project" value="UniProtKB-SubCell"/>
</dbReference>
<dbReference type="GO" id="GO:0045892">
    <property type="term" value="P:negative regulation of DNA-templated transcription"/>
    <property type="evidence" value="ECO:0007669"/>
    <property type="project" value="InterPro"/>
</dbReference>
<dbReference type="CDD" id="cd03032">
    <property type="entry name" value="ArsC_Spx"/>
    <property type="match status" value="1"/>
</dbReference>
<dbReference type="Gene3D" id="3.40.30.10">
    <property type="entry name" value="Glutaredoxin"/>
    <property type="match status" value="1"/>
</dbReference>
<dbReference type="HAMAP" id="MF_01132">
    <property type="entry name" value="Spx"/>
    <property type="match status" value="1"/>
</dbReference>
<dbReference type="InterPro" id="IPR006660">
    <property type="entry name" value="Arsenate_reductase-like"/>
</dbReference>
<dbReference type="InterPro" id="IPR023731">
    <property type="entry name" value="Spx"/>
</dbReference>
<dbReference type="InterPro" id="IPR036249">
    <property type="entry name" value="Thioredoxin-like_sf"/>
</dbReference>
<dbReference type="InterPro" id="IPR006504">
    <property type="entry name" value="Tscrpt_reg_Spx/MgsR"/>
</dbReference>
<dbReference type="NCBIfam" id="TIGR01617">
    <property type="entry name" value="arsC_related"/>
    <property type="match status" value="1"/>
</dbReference>
<dbReference type="NCBIfam" id="NF002459">
    <property type="entry name" value="PRK01655.1"/>
    <property type="match status" value="1"/>
</dbReference>
<dbReference type="NCBIfam" id="NF009210">
    <property type="entry name" value="PRK12559.1"/>
    <property type="match status" value="1"/>
</dbReference>
<dbReference type="PANTHER" id="PTHR30041">
    <property type="entry name" value="ARSENATE REDUCTASE"/>
    <property type="match status" value="1"/>
</dbReference>
<dbReference type="PANTHER" id="PTHR30041:SF7">
    <property type="entry name" value="GLOBAL TRANSCRIPTIONAL REGULATOR SPX"/>
    <property type="match status" value="1"/>
</dbReference>
<dbReference type="Pfam" id="PF03960">
    <property type="entry name" value="ArsC"/>
    <property type="match status" value="1"/>
</dbReference>
<dbReference type="SUPFAM" id="SSF52833">
    <property type="entry name" value="Thioredoxin-like"/>
    <property type="match status" value="1"/>
</dbReference>
<dbReference type="PROSITE" id="PS51353">
    <property type="entry name" value="ARSC"/>
    <property type="match status" value="1"/>
</dbReference>
<proteinExistence type="inferred from homology"/>
<feature type="chain" id="PRO_0000162552" description="Global transcriptional regulator Spx">
    <location>
        <begin position="1"/>
        <end position="132"/>
    </location>
</feature>
<feature type="disulfide bond" description="Redox-active" evidence="1">
    <location>
        <begin position="10"/>
        <end position="13"/>
    </location>
</feature>
<comment type="function">
    <text evidence="1">Global transcriptional regulator that plays a key role in stress response and exerts either positive or negative regulation of genes. Acts by interacting with the C-terminal domain of the alpha subunit of the RNA polymerase (RNAP). This interaction can enhance binding of RNAP to the promoter region of target genes and stimulate their transcription, or block interaction of RNAP with activator.</text>
</comment>
<comment type="subunit">
    <text evidence="1">Interacts with the C-terminal domain of the alpha subunit of the RNAP.</text>
</comment>
<comment type="subcellular location">
    <subcellularLocation>
        <location evidence="1">Cytoplasm</location>
    </subcellularLocation>
</comment>
<comment type="similarity">
    <text evidence="1">Belongs to the ArsC family. Spx subfamily.</text>
</comment>
<accession>Q830U3</accession>
<organism>
    <name type="scientific">Enterococcus faecalis (strain ATCC 700802 / V583)</name>
    <dbReference type="NCBI Taxonomy" id="226185"/>
    <lineage>
        <taxon>Bacteria</taxon>
        <taxon>Bacillati</taxon>
        <taxon>Bacillota</taxon>
        <taxon>Bacilli</taxon>
        <taxon>Lactobacillales</taxon>
        <taxon>Enterococcaceae</taxon>
        <taxon>Enterococcus</taxon>
    </lineage>
</organism>